<accession>Q03WW2</accession>
<sequence>MTVNIYDNANEMANILTETQQYIAWQNAFNAIQNDTDSKALFGEFQEIQMAVQQMMQSQQQPKPEQEKEWDAVAAKVQKDEKINALMEAEQALNTLLTELNDIVTKPVAEAYSKLQK</sequence>
<keyword id="KW-1185">Reference proteome</keyword>
<proteinExistence type="inferred from homology"/>
<organism>
    <name type="scientific">Leuconostoc mesenteroides subsp. mesenteroides (strain ATCC 8293 / DSM 20343 / BCRC 11652 / CCM 1803 / JCM 6124 / NCDO 523 / NBRC 100496 / NCIMB 8023 / NCTC 12954 / NRRL B-1118 / 37Y)</name>
    <dbReference type="NCBI Taxonomy" id="203120"/>
    <lineage>
        <taxon>Bacteria</taxon>
        <taxon>Bacillati</taxon>
        <taxon>Bacillota</taxon>
        <taxon>Bacilli</taxon>
        <taxon>Lactobacillales</taxon>
        <taxon>Lactobacillaceae</taxon>
        <taxon>Leuconostoc</taxon>
    </lineage>
</organism>
<feature type="chain" id="PRO_0000292737" description="UPF0342 protein LEUM_1212">
    <location>
        <begin position="1"/>
        <end position="117"/>
    </location>
</feature>
<dbReference type="EMBL" id="CP000414">
    <property type="protein sequence ID" value="ABJ62310.1"/>
    <property type="molecule type" value="Genomic_DNA"/>
</dbReference>
<dbReference type="RefSeq" id="WP_010290990.1">
    <property type="nucleotide sequence ID" value="NC_008531.1"/>
</dbReference>
<dbReference type="SMR" id="Q03WW2"/>
<dbReference type="EnsemblBacteria" id="ABJ62310">
    <property type="protein sequence ID" value="ABJ62310"/>
    <property type="gene ID" value="LEUM_1212"/>
</dbReference>
<dbReference type="KEGG" id="lme:LEUM_1212"/>
<dbReference type="eggNOG" id="COG3679">
    <property type="taxonomic scope" value="Bacteria"/>
</dbReference>
<dbReference type="HOGENOM" id="CLU_140243_3_1_9"/>
<dbReference type="Proteomes" id="UP000000362">
    <property type="component" value="Chromosome"/>
</dbReference>
<dbReference type="Gene3D" id="1.20.1500.10">
    <property type="entry name" value="YheA/YmcA-like"/>
    <property type="match status" value="1"/>
</dbReference>
<dbReference type="HAMAP" id="MF_01526">
    <property type="entry name" value="UPF0342"/>
    <property type="match status" value="1"/>
</dbReference>
<dbReference type="InterPro" id="IPR010368">
    <property type="entry name" value="Com_YlbF"/>
</dbReference>
<dbReference type="InterPro" id="IPR023378">
    <property type="entry name" value="YheA/YmcA-like_dom_sf"/>
</dbReference>
<dbReference type="Pfam" id="PF06133">
    <property type="entry name" value="Com_YlbF"/>
    <property type="match status" value="1"/>
</dbReference>
<dbReference type="SUPFAM" id="SSF158622">
    <property type="entry name" value="YheA/YmcA-like"/>
    <property type="match status" value="1"/>
</dbReference>
<comment type="similarity">
    <text evidence="1">Belongs to the UPF0342 family.</text>
</comment>
<protein>
    <recommendedName>
        <fullName evidence="1">UPF0342 protein LEUM_1212</fullName>
    </recommendedName>
</protein>
<reference key="1">
    <citation type="journal article" date="2006" name="Proc. Natl. Acad. Sci. U.S.A.">
        <title>Comparative genomics of the lactic acid bacteria.</title>
        <authorList>
            <person name="Makarova K.S."/>
            <person name="Slesarev A."/>
            <person name="Wolf Y.I."/>
            <person name="Sorokin A."/>
            <person name="Mirkin B."/>
            <person name="Koonin E.V."/>
            <person name="Pavlov A."/>
            <person name="Pavlova N."/>
            <person name="Karamychev V."/>
            <person name="Polouchine N."/>
            <person name="Shakhova V."/>
            <person name="Grigoriev I."/>
            <person name="Lou Y."/>
            <person name="Rohksar D."/>
            <person name="Lucas S."/>
            <person name="Huang K."/>
            <person name="Goodstein D.M."/>
            <person name="Hawkins T."/>
            <person name="Plengvidhya V."/>
            <person name="Welker D."/>
            <person name="Hughes J."/>
            <person name="Goh Y."/>
            <person name="Benson A."/>
            <person name="Baldwin K."/>
            <person name="Lee J.-H."/>
            <person name="Diaz-Muniz I."/>
            <person name="Dosti B."/>
            <person name="Smeianov V."/>
            <person name="Wechter W."/>
            <person name="Barabote R."/>
            <person name="Lorca G."/>
            <person name="Altermann E."/>
            <person name="Barrangou R."/>
            <person name="Ganesan B."/>
            <person name="Xie Y."/>
            <person name="Rawsthorne H."/>
            <person name="Tamir D."/>
            <person name="Parker C."/>
            <person name="Breidt F."/>
            <person name="Broadbent J.R."/>
            <person name="Hutkins R."/>
            <person name="O'Sullivan D."/>
            <person name="Steele J."/>
            <person name="Unlu G."/>
            <person name="Saier M.H. Jr."/>
            <person name="Klaenhammer T."/>
            <person name="Richardson P."/>
            <person name="Kozyavkin S."/>
            <person name="Weimer B.C."/>
            <person name="Mills D.A."/>
        </authorList>
    </citation>
    <scope>NUCLEOTIDE SEQUENCE [LARGE SCALE GENOMIC DNA]</scope>
    <source>
        <strain>ATCC 8293 / DSM 20343 / BCRC 11652 / CCM 1803 / JCM 6124 / NCDO 523 / NBRC 100496 / NCIMB 8023 / NCTC 12954 / NRRL B-1118 / 37Y</strain>
    </source>
</reference>
<gene>
    <name type="ordered locus">LEUM_1212</name>
</gene>
<evidence type="ECO:0000255" key="1">
    <source>
        <dbReference type="HAMAP-Rule" id="MF_01526"/>
    </source>
</evidence>
<name>Y1212_LEUMM</name>